<name>PURA_STRPZ</name>
<sequence>MTSVVVVGTQWGDEGKGKITDFLSADAEVIARYQGGDNAGHTIVIDGKKFKLHLIPSGIFFPQKISVIGNGVVVNPKSLVKELAYLHDEGVTTDNLRISDRAHVILPYHIQLDQLQEDAKGDNKIGTTIKGIGPAYMDKAARVGIRIADLLDKDIFAERLRINLAEKNRLFEKMYDSTPLDFDAIFEEYYAYGQEIKQYVTDTSVILNDALDAGKRVLFEGAQGVMLDIDQGTYPFVTSSNPVAGGVTIGSGVGPSKINKVVGVCKAYTSRVGDGPFPTELFDEVGERIREVGHEYGTTTGRPRRVGWFDSVVMRHSRRVSGITNLSLNSIDVLSGLDTVKICVAYDLDGERIDHYPASLEQLKRCKPIYEELPGWQEDITGVRSLDELPENARNYVRRVGELVGVRISTFSVGPGREQTNILESVWASI</sequence>
<keyword id="KW-0963">Cytoplasm</keyword>
<keyword id="KW-0342">GTP-binding</keyword>
<keyword id="KW-0436">Ligase</keyword>
<keyword id="KW-0460">Magnesium</keyword>
<keyword id="KW-0479">Metal-binding</keyword>
<keyword id="KW-0547">Nucleotide-binding</keyword>
<keyword id="KW-0658">Purine biosynthesis</keyword>
<proteinExistence type="inferred from homology"/>
<protein>
    <recommendedName>
        <fullName evidence="1">Adenylosuccinate synthetase</fullName>
        <shortName evidence="1">AMPSase</shortName>
        <shortName evidence="1">AdSS</shortName>
        <ecNumber evidence="1">6.3.4.4</ecNumber>
    </recommendedName>
    <alternativeName>
        <fullName evidence="1">IMP--aspartate ligase</fullName>
    </alternativeName>
</protein>
<gene>
    <name evidence="1" type="primary">purA</name>
    <name type="ordered locus">Spy49_0141</name>
</gene>
<feature type="chain" id="PRO_1000089344" description="Adenylosuccinate synthetase">
    <location>
        <begin position="1"/>
        <end position="430"/>
    </location>
</feature>
<feature type="active site" description="Proton acceptor" evidence="1">
    <location>
        <position position="13"/>
    </location>
</feature>
<feature type="active site" description="Proton donor" evidence="1">
    <location>
        <position position="41"/>
    </location>
</feature>
<feature type="binding site" evidence="1">
    <location>
        <begin position="12"/>
        <end position="18"/>
    </location>
    <ligand>
        <name>GTP</name>
        <dbReference type="ChEBI" id="CHEBI:37565"/>
    </ligand>
</feature>
<feature type="binding site" description="in other chain" evidence="1">
    <location>
        <begin position="13"/>
        <end position="16"/>
    </location>
    <ligand>
        <name>IMP</name>
        <dbReference type="ChEBI" id="CHEBI:58053"/>
        <note>ligand shared between dimeric partners</note>
    </ligand>
</feature>
<feature type="binding site" evidence="1">
    <location>
        <position position="13"/>
    </location>
    <ligand>
        <name>Mg(2+)</name>
        <dbReference type="ChEBI" id="CHEBI:18420"/>
    </ligand>
</feature>
<feature type="binding site" description="in other chain" evidence="1">
    <location>
        <begin position="38"/>
        <end position="41"/>
    </location>
    <ligand>
        <name>IMP</name>
        <dbReference type="ChEBI" id="CHEBI:58053"/>
        <note>ligand shared between dimeric partners</note>
    </ligand>
</feature>
<feature type="binding site" evidence="1">
    <location>
        <begin position="40"/>
        <end position="42"/>
    </location>
    <ligand>
        <name>GTP</name>
        <dbReference type="ChEBI" id="CHEBI:37565"/>
    </ligand>
</feature>
<feature type="binding site" evidence="1">
    <location>
        <position position="40"/>
    </location>
    <ligand>
        <name>Mg(2+)</name>
        <dbReference type="ChEBI" id="CHEBI:18420"/>
    </ligand>
</feature>
<feature type="binding site" description="in other chain" evidence="1">
    <location>
        <position position="128"/>
    </location>
    <ligand>
        <name>IMP</name>
        <dbReference type="ChEBI" id="CHEBI:58053"/>
        <note>ligand shared between dimeric partners</note>
    </ligand>
</feature>
<feature type="binding site" evidence="1">
    <location>
        <position position="142"/>
    </location>
    <ligand>
        <name>IMP</name>
        <dbReference type="ChEBI" id="CHEBI:58053"/>
        <note>ligand shared between dimeric partners</note>
    </ligand>
</feature>
<feature type="binding site" description="in other chain" evidence="1">
    <location>
        <position position="223"/>
    </location>
    <ligand>
        <name>IMP</name>
        <dbReference type="ChEBI" id="CHEBI:58053"/>
        <note>ligand shared between dimeric partners</note>
    </ligand>
</feature>
<feature type="binding site" description="in other chain" evidence="1">
    <location>
        <position position="238"/>
    </location>
    <ligand>
        <name>IMP</name>
        <dbReference type="ChEBI" id="CHEBI:58053"/>
        <note>ligand shared between dimeric partners</note>
    </ligand>
</feature>
<feature type="binding site" evidence="1">
    <location>
        <begin position="298"/>
        <end position="304"/>
    </location>
    <ligand>
        <name>substrate</name>
    </ligand>
</feature>
<feature type="binding site" description="in other chain" evidence="1">
    <location>
        <position position="302"/>
    </location>
    <ligand>
        <name>IMP</name>
        <dbReference type="ChEBI" id="CHEBI:58053"/>
        <note>ligand shared between dimeric partners</note>
    </ligand>
</feature>
<feature type="binding site" evidence="1">
    <location>
        <position position="304"/>
    </location>
    <ligand>
        <name>GTP</name>
        <dbReference type="ChEBI" id="CHEBI:37565"/>
    </ligand>
</feature>
<feature type="binding site" evidence="1">
    <location>
        <begin position="330"/>
        <end position="332"/>
    </location>
    <ligand>
        <name>GTP</name>
        <dbReference type="ChEBI" id="CHEBI:37565"/>
    </ligand>
</feature>
<feature type="binding site" evidence="1">
    <location>
        <begin position="412"/>
        <end position="414"/>
    </location>
    <ligand>
        <name>GTP</name>
        <dbReference type="ChEBI" id="CHEBI:37565"/>
    </ligand>
</feature>
<evidence type="ECO:0000255" key="1">
    <source>
        <dbReference type="HAMAP-Rule" id="MF_00011"/>
    </source>
</evidence>
<comment type="function">
    <text evidence="1">Plays an important role in the de novo pathway of purine nucleotide biosynthesis. Catalyzes the first committed step in the biosynthesis of AMP from IMP.</text>
</comment>
<comment type="catalytic activity">
    <reaction evidence="1">
        <text>IMP + L-aspartate + GTP = N(6)-(1,2-dicarboxyethyl)-AMP + GDP + phosphate + 2 H(+)</text>
        <dbReference type="Rhea" id="RHEA:15753"/>
        <dbReference type="ChEBI" id="CHEBI:15378"/>
        <dbReference type="ChEBI" id="CHEBI:29991"/>
        <dbReference type="ChEBI" id="CHEBI:37565"/>
        <dbReference type="ChEBI" id="CHEBI:43474"/>
        <dbReference type="ChEBI" id="CHEBI:57567"/>
        <dbReference type="ChEBI" id="CHEBI:58053"/>
        <dbReference type="ChEBI" id="CHEBI:58189"/>
        <dbReference type="EC" id="6.3.4.4"/>
    </reaction>
</comment>
<comment type="cofactor">
    <cofactor evidence="1">
        <name>Mg(2+)</name>
        <dbReference type="ChEBI" id="CHEBI:18420"/>
    </cofactor>
    <text evidence="1">Binds 1 Mg(2+) ion per subunit.</text>
</comment>
<comment type="pathway">
    <text evidence="1">Purine metabolism; AMP biosynthesis via de novo pathway; AMP from IMP: step 1/2.</text>
</comment>
<comment type="subunit">
    <text evidence="1">Homodimer.</text>
</comment>
<comment type="subcellular location">
    <subcellularLocation>
        <location evidence="1">Cytoplasm</location>
    </subcellularLocation>
</comment>
<comment type="similarity">
    <text evidence="1">Belongs to the adenylosuccinate synthetase family.</text>
</comment>
<reference key="1">
    <citation type="journal article" date="2008" name="J. Bacteriol.">
        <title>Genome sequence of a nephritogenic and highly transformable M49 strain of Streptococcus pyogenes.</title>
        <authorList>
            <person name="McShan W.M."/>
            <person name="Ferretti J.J."/>
            <person name="Karasawa T."/>
            <person name="Suvorov A.N."/>
            <person name="Lin S."/>
            <person name="Qin B."/>
            <person name="Jia H."/>
            <person name="Kenton S."/>
            <person name="Najar F."/>
            <person name="Wu H."/>
            <person name="Scott J."/>
            <person name="Roe B.A."/>
            <person name="Savic D.J."/>
        </authorList>
    </citation>
    <scope>NUCLEOTIDE SEQUENCE [LARGE SCALE GENOMIC DNA]</scope>
    <source>
        <strain>NZ131</strain>
    </source>
</reference>
<accession>B5XJH8</accession>
<dbReference type="EC" id="6.3.4.4" evidence="1"/>
<dbReference type="EMBL" id="CP000829">
    <property type="protein sequence ID" value="ACI60490.1"/>
    <property type="molecule type" value="Genomic_DNA"/>
</dbReference>
<dbReference type="SMR" id="B5XJH8"/>
<dbReference type="KEGG" id="soz:Spy49_0141"/>
<dbReference type="HOGENOM" id="CLU_029848_0_0_9"/>
<dbReference type="UniPathway" id="UPA00075">
    <property type="reaction ID" value="UER00335"/>
</dbReference>
<dbReference type="Proteomes" id="UP000001039">
    <property type="component" value="Chromosome"/>
</dbReference>
<dbReference type="GO" id="GO:0005737">
    <property type="term" value="C:cytoplasm"/>
    <property type="evidence" value="ECO:0007669"/>
    <property type="project" value="UniProtKB-SubCell"/>
</dbReference>
<dbReference type="GO" id="GO:0004019">
    <property type="term" value="F:adenylosuccinate synthase activity"/>
    <property type="evidence" value="ECO:0007669"/>
    <property type="project" value="UniProtKB-UniRule"/>
</dbReference>
<dbReference type="GO" id="GO:0005525">
    <property type="term" value="F:GTP binding"/>
    <property type="evidence" value="ECO:0007669"/>
    <property type="project" value="UniProtKB-UniRule"/>
</dbReference>
<dbReference type="GO" id="GO:0000287">
    <property type="term" value="F:magnesium ion binding"/>
    <property type="evidence" value="ECO:0007669"/>
    <property type="project" value="UniProtKB-UniRule"/>
</dbReference>
<dbReference type="GO" id="GO:0044208">
    <property type="term" value="P:'de novo' AMP biosynthetic process"/>
    <property type="evidence" value="ECO:0007669"/>
    <property type="project" value="UniProtKB-UniRule"/>
</dbReference>
<dbReference type="GO" id="GO:0046040">
    <property type="term" value="P:IMP metabolic process"/>
    <property type="evidence" value="ECO:0007669"/>
    <property type="project" value="TreeGrafter"/>
</dbReference>
<dbReference type="CDD" id="cd03108">
    <property type="entry name" value="AdSS"/>
    <property type="match status" value="1"/>
</dbReference>
<dbReference type="FunFam" id="1.10.300.10:FF:000001">
    <property type="entry name" value="Adenylosuccinate synthetase"/>
    <property type="match status" value="1"/>
</dbReference>
<dbReference type="FunFam" id="3.90.170.10:FF:000001">
    <property type="entry name" value="Adenylosuccinate synthetase"/>
    <property type="match status" value="1"/>
</dbReference>
<dbReference type="Gene3D" id="3.40.440.10">
    <property type="entry name" value="Adenylosuccinate Synthetase, subunit A, domain 1"/>
    <property type="match status" value="1"/>
</dbReference>
<dbReference type="Gene3D" id="1.10.300.10">
    <property type="entry name" value="Adenylosuccinate Synthetase, subunit A, domain 2"/>
    <property type="match status" value="1"/>
</dbReference>
<dbReference type="Gene3D" id="3.90.170.10">
    <property type="entry name" value="Adenylosuccinate Synthetase, subunit A, domain 3"/>
    <property type="match status" value="1"/>
</dbReference>
<dbReference type="HAMAP" id="MF_00011">
    <property type="entry name" value="Adenylosucc_synth"/>
    <property type="match status" value="1"/>
</dbReference>
<dbReference type="InterPro" id="IPR018220">
    <property type="entry name" value="Adenylosuccin_syn_GTP-bd"/>
</dbReference>
<dbReference type="InterPro" id="IPR033128">
    <property type="entry name" value="Adenylosuccin_syn_Lys_AS"/>
</dbReference>
<dbReference type="InterPro" id="IPR042109">
    <property type="entry name" value="Adenylosuccinate_synth_dom1"/>
</dbReference>
<dbReference type="InterPro" id="IPR042110">
    <property type="entry name" value="Adenylosuccinate_synth_dom2"/>
</dbReference>
<dbReference type="InterPro" id="IPR042111">
    <property type="entry name" value="Adenylosuccinate_synth_dom3"/>
</dbReference>
<dbReference type="InterPro" id="IPR001114">
    <property type="entry name" value="Adenylosuccinate_synthetase"/>
</dbReference>
<dbReference type="InterPro" id="IPR027417">
    <property type="entry name" value="P-loop_NTPase"/>
</dbReference>
<dbReference type="NCBIfam" id="NF002223">
    <property type="entry name" value="PRK01117.1"/>
    <property type="match status" value="1"/>
</dbReference>
<dbReference type="NCBIfam" id="TIGR00184">
    <property type="entry name" value="purA"/>
    <property type="match status" value="1"/>
</dbReference>
<dbReference type="PANTHER" id="PTHR11846">
    <property type="entry name" value="ADENYLOSUCCINATE SYNTHETASE"/>
    <property type="match status" value="1"/>
</dbReference>
<dbReference type="PANTHER" id="PTHR11846:SF0">
    <property type="entry name" value="ADENYLOSUCCINATE SYNTHETASE"/>
    <property type="match status" value="1"/>
</dbReference>
<dbReference type="Pfam" id="PF00709">
    <property type="entry name" value="Adenylsucc_synt"/>
    <property type="match status" value="1"/>
</dbReference>
<dbReference type="SMART" id="SM00788">
    <property type="entry name" value="Adenylsucc_synt"/>
    <property type="match status" value="1"/>
</dbReference>
<dbReference type="SUPFAM" id="SSF52540">
    <property type="entry name" value="P-loop containing nucleoside triphosphate hydrolases"/>
    <property type="match status" value="1"/>
</dbReference>
<dbReference type="PROSITE" id="PS01266">
    <property type="entry name" value="ADENYLOSUCCIN_SYN_1"/>
    <property type="match status" value="1"/>
</dbReference>
<dbReference type="PROSITE" id="PS00513">
    <property type="entry name" value="ADENYLOSUCCIN_SYN_2"/>
    <property type="match status" value="1"/>
</dbReference>
<organism>
    <name type="scientific">Streptococcus pyogenes serotype M49 (strain NZ131)</name>
    <dbReference type="NCBI Taxonomy" id="471876"/>
    <lineage>
        <taxon>Bacteria</taxon>
        <taxon>Bacillati</taxon>
        <taxon>Bacillota</taxon>
        <taxon>Bacilli</taxon>
        <taxon>Lactobacillales</taxon>
        <taxon>Streptococcaceae</taxon>
        <taxon>Streptococcus</taxon>
    </lineage>
</organism>